<dbReference type="EC" id="3.6.5.n1" evidence="1"/>
<dbReference type="EMBL" id="AM942444">
    <property type="protein sequence ID" value="CAQ05313.1"/>
    <property type="molecule type" value="Genomic_DNA"/>
</dbReference>
<dbReference type="RefSeq" id="WP_012360601.1">
    <property type="nucleotide sequence ID" value="NC_010545.1"/>
</dbReference>
<dbReference type="SMR" id="B1VGK6"/>
<dbReference type="STRING" id="504474.cu1353"/>
<dbReference type="GeneID" id="60604133"/>
<dbReference type="KEGG" id="cur:cu1353"/>
<dbReference type="eggNOG" id="COG0481">
    <property type="taxonomic scope" value="Bacteria"/>
</dbReference>
<dbReference type="HOGENOM" id="CLU_009995_3_3_11"/>
<dbReference type="Proteomes" id="UP000001727">
    <property type="component" value="Chromosome"/>
</dbReference>
<dbReference type="GO" id="GO:0005886">
    <property type="term" value="C:plasma membrane"/>
    <property type="evidence" value="ECO:0007669"/>
    <property type="project" value="UniProtKB-SubCell"/>
</dbReference>
<dbReference type="GO" id="GO:0005525">
    <property type="term" value="F:GTP binding"/>
    <property type="evidence" value="ECO:0007669"/>
    <property type="project" value="UniProtKB-UniRule"/>
</dbReference>
<dbReference type="GO" id="GO:0003924">
    <property type="term" value="F:GTPase activity"/>
    <property type="evidence" value="ECO:0007669"/>
    <property type="project" value="UniProtKB-UniRule"/>
</dbReference>
<dbReference type="GO" id="GO:0043022">
    <property type="term" value="F:ribosome binding"/>
    <property type="evidence" value="ECO:0007669"/>
    <property type="project" value="UniProtKB-UniRule"/>
</dbReference>
<dbReference type="GO" id="GO:0003746">
    <property type="term" value="F:translation elongation factor activity"/>
    <property type="evidence" value="ECO:0007669"/>
    <property type="project" value="UniProtKB-UniRule"/>
</dbReference>
<dbReference type="GO" id="GO:0045727">
    <property type="term" value="P:positive regulation of translation"/>
    <property type="evidence" value="ECO:0007669"/>
    <property type="project" value="UniProtKB-UniRule"/>
</dbReference>
<dbReference type="CDD" id="cd03699">
    <property type="entry name" value="EF4_II"/>
    <property type="match status" value="1"/>
</dbReference>
<dbReference type="CDD" id="cd16260">
    <property type="entry name" value="EF4_III"/>
    <property type="match status" value="1"/>
</dbReference>
<dbReference type="CDD" id="cd01890">
    <property type="entry name" value="LepA"/>
    <property type="match status" value="1"/>
</dbReference>
<dbReference type="CDD" id="cd03709">
    <property type="entry name" value="lepA_C"/>
    <property type="match status" value="1"/>
</dbReference>
<dbReference type="FunFam" id="3.40.50.300:FF:000078">
    <property type="entry name" value="Elongation factor 4"/>
    <property type="match status" value="1"/>
</dbReference>
<dbReference type="FunFam" id="2.40.30.10:FF:000015">
    <property type="entry name" value="Translation factor GUF1, mitochondrial"/>
    <property type="match status" value="1"/>
</dbReference>
<dbReference type="FunFam" id="3.30.70.240:FF:000007">
    <property type="entry name" value="Translation factor GUF1, mitochondrial"/>
    <property type="match status" value="1"/>
</dbReference>
<dbReference type="FunFam" id="3.30.70.2570:FF:000001">
    <property type="entry name" value="Translation factor GUF1, mitochondrial"/>
    <property type="match status" value="1"/>
</dbReference>
<dbReference type="FunFam" id="3.30.70.870:FF:000004">
    <property type="entry name" value="Translation factor GUF1, mitochondrial"/>
    <property type="match status" value="1"/>
</dbReference>
<dbReference type="Gene3D" id="3.30.70.240">
    <property type="match status" value="1"/>
</dbReference>
<dbReference type="Gene3D" id="3.30.70.2570">
    <property type="entry name" value="Elongation factor 4, C-terminal domain"/>
    <property type="match status" value="1"/>
</dbReference>
<dbReference type="Gene3D" id="3.30.70.870">
    <property type="entry name" value="Elongation Factor G (Translational Gtpase), domain 3"/>
    <property type="match status" value="1"/>
</dbReference>
<dbReference type="Gene3D" id="3.40.50.300">
    <property type="entry name" value="P-loop containing nucleotide triphosphate hydrolases"/>
    <property type="match status" value="1"/>
</dbReference>
<dbReference type="Gene3D" id="2.40.30.10">
    <property type="entry name" value="Translation factors"/>
    <property type="match status" value="1"/>
</dbReference>
<dbReference type="HAMAP" id="MF_00071">
    <property type="entry name" value="LepA"/>
    <property type="match status" value="1"/>
</dbReference>
<dbReference type="InterPro" id="IPR006297">
    <property type="entry name" value="EF-4"/>
</dbReference>
<dbReference type="InterPro" id="IPR035647">
    <property type="entry name" value="EFG_III/V"/>
</dbReference>
<dbReference type="InterPro" id="IPR000640">
    <property type="entry name" value="EFG_V-like"/>
</dbReference>
<dbReference type="InterPro" id="IPR031157">
    <property type="entry name" value="G_TR_CS"/>
</dbReference>
<dbReference type="InterPro" id="IPR038363">
    <property type="entry name" value="LepA_C_sf"/>
</dbReference>
<dbReference type="InterPro" id="IPR013842">
    <property type="entry name" value="LepA_CTD"/>
</dbReference>
<dbReference type="InterPro" id="IPR035654">
    <property type="entry name" value="LepA_IV"/>
</dbReference>
<dbReference type="InterPro" id="IPR027417">
    <property type="entry name" value="P-loop_NTPase"/>
</dbReference>
<dbReference type="InterPro" id="IPR005225">
    <property type="entry name" value="Small_GTP-bd"/>
</dbReference>
<dbReference type="InterPro" id="IPR000795">
    <property type="entry name" value="T_Tr_GTP-bd_dom"/>
</dbReference>
<dbReference type="InterPro" id="IPR009000">
    <property type="entry name" value="Transl_B-barrel_sf"/>
</dbReference>
<dbReference type="NCBIfam" id="TIGR01393">
    <property type="entry name" value="lepA"/>
    <property type="match status" value="1"/>
</dbReference>
<dbReference type="NCBIfam" id="TIGR00231">
    <property type="entry name" value="small_GTP"/>
    <property type="match status" value="1"/>
</dbReference>
<dbReference type="PANTHER" id="PTHR43512:SF4">
    <property type="entry name" value="TRANSLATION FACTOR GUF1 HOMOLOG, CHLOROPLASTIC"/>
    <property type="match status" value="1"/>
</dbReference>
<dbReference type="PANTHER" id="PTHR43512">
    <property type="entry name" value="TRANSLATION FACTOR GUF1-RELATED"/>
    <property type="match status" value="1"/>
</dbReference>
<dbReference type="Pfam" id="PF00679">
    <property type="entry name" value="EFG_C"/>
    <property type="match status" value="1"/>
</dbReference>
<dbReference type="Pfam" id="PF00009">
    <property type="entry name" value="GTP_EFTU"/>
    <property type="match status" value="1"/>
</dbReference>
<dbReference type="Pfam" id="PF06421">
    <property type="entry name" value="LepA_C"/>
    <property type="match status" value="1"/>
</dbReference>
<dbReference type="PRINTS" id="PR00315">
    <property type="entry name" value="ELONGATNFCT"/>
</dbReference>
<dbReference type="SMART" id="SM00838">
    <property type="entry name" value="EFG_C"/>
    <property type="match status" value="1"/>
</dbReference>
<dbReference type="SUPFAM" id="SSF54980">
    <property type="entry name" value="EF-G C-terminal domain-like"/>
    <property type="match status" value="2"/>
</dbReference>
<dbReference type="SUPFAM" id="SSF52540">
    <property type="entry name" value="P-loop containing nucleoside triphosphate hydrolases"/>
    <property type="match status" value="1"/>
</dbReference>
<dbReference type="SUPFAM" id="SSF50447">
    <property type="entry name" value="Translation proteins"/>
    <property type="match status" value="1"/>
</dbReference>
<dbReference type="PROSITE" id="PS00301">
    <property type="entry name" value="G_TR_1"/>
    <property type="match status" value="1"/>
</dbReference>
<dbReference type="PROSITE" id="PS51722">
    <property type="entry name" value="G_TR_2"/>
    <property type="match status" value="1"/>
</dbReference>
<accession>B1VGK6</accession>
<organism>
    <name type="scientific">Corynebacterium urealyticum (strain ATCC 43042 / DSM 7109)</name>
    <dbReference type="NCBI Taxonomy" id="504474"/>
    <lineage>
        <taxon>Bacteria</taxon>
        <taxon>Bacillati</taxon>
        <taxon>Actinomycetota</taxon>
        <taxon>Actinomycetes</taxon>
        <taxon>Mycobacteriales</taxon>
        <taxon>Corynebacteriaceae</taxon>
        <taxon>Corynebacterium</taxon>
    </lineage>
</organism>
<comment type="function">
    <text evidence="1">Required for accurate and efficient protein synthesis under certain stress conditions. May act as a fidelity factor of the translation reaction, by catalyzing a one-codon backward translocation of tRNAs on improperly translocated ribosomes. Back-translocation proceeds from a post-translocation (POST) complex to a pre-translocation (PRE) complex, thus giving elongation factor G a second chance to translocate the tRNAs correctly. Binds to ribosomes in a GTP-dependent manner.</text>
</comment>
<comment type="catalytic activity">
    <reaction evidence="1">
        <text>GTP + H2O = GDP + phosphate + H(+)</text>
        <dbReference type="Rhea" id="RHEA:19669"/>
        <dbReference type="ChEBI" id="CHEBI:15377"/>
        <dbReference type="ChEBI" id="CHEBI:15378"/>
        <dbReference type="ChEBI" id="CHEBI:37565"/>
        <dbReference type="ChEBI" id="CHEBI:43474"/>
        <dbReference type="ChEBI" id="CHEBI:58189"/>
        <dbReference type="EC" id="3.6.5.n1"/>
    </reaction>
</comment>
<comment type="subcellular location">
    <subcellularLocation>
        <location evidence="1">Cell membrane</location>
        <topology evidence="1">Peripheral membrane protein</topology>
        <orientation evidence="1">Cytoplasmic side</orientation>
    </subcellularLocation>
</comment>
<comment type="similarity">
    <text evidence="1">Belongs to the TRAFAC class translation factor GTPase superfamily. Classic translation factor GTPase family. LepA subfamily.</text>
</comment>
<keyword id="KW-1003">Cell membrane</keyword>
<keyword id="KW-0342">GTP-binding</keyword>
<keyword id="KW-0378">Hydrolase</keyword>
<keyword id="KW-0472">Membrane</keyword>
<keyword id="KW-0547">Nucleotide-binding</keyword>
<keyword id="KW-0648">Protein biosynthesis</keyword>
<keyword id="KW-1185">Reference proteome</keyword>
<sequence>MSAKQKNYAIETFTEPERIRNFCIIAHIDHGKSTLADRILDLSGVIEHRDMRDRYLDNMELERERGITIKAQNVRIPWVPKSGAHEGEQLVLQLIDTPGHVDFTYEVSRALEACEGAILLVDAAQGIEAQTLANLYLAMDKDLEIIPVLNKIDLPAADPEKYSQELANIIGCEPEEVLRVSGKTGEGVPELLDRVCELVPHPVGDPDAPARALIFDSVYDTYRGVVTYVRMMDGRLNDREKNKMMSTGTEHDTLEIGVVSPGPTKTKGLSVGEVGYLITGVKDVRQSKVGDTVTLAHNGATEPLQGYAEPKPMVYSGLFPISADQYPELREAIEKLQLNDASLSFEPETSVALGFGFRCGFLGLLHMEITRTRLEREFGLDLISTAPSVVYRVIQEDGTETFVRNPSDWPGGKLQAVYEPMVDMTIIVPEAFLGGTMELCQSKRGQMKNMDFLSQDRVELRYRIPLGEIIFDFFDSLKSRTKGYASLNYEEAGEEQADLVKVDILLQGEPVDAFSAIVHRENAHYYGNKMAVKLKDLIPRQQFEVPIQAAIGSKIIARENIRALRKDVLAKCYGGDISRKRKLLEKQKEGKKRMKNIGTVSVPQEAFVAALSTGGED</sequence>
<evidence type="ECO:0000255" key="1">
    <source>
        <dbReference type="HAMAP-Rule" id="MF_00071"/>
    </source>
</evidence>
<feature type="chain" id="PRO_1000092389" description="Elongation factor 4">
    <location>
        <begin position="1"/>
        <end position="617"/>
    </location>
</feature>
<feature type="domain" description="tr-type G">
    <location>
        <begin position="17"/>
        <end position="203"/>
    </location>
</feature>
<feature type="binding site" evidence="1">
    <location>
        <begin position="29"/>
        <end position="34"/>
    </location>
    <ligand>
        <name>GTP</name>
        <dbReference type="ChEBI" id="CHEBI:37565"/>
    </ligand>
</feature>
<feature type="binding site" evidence="1">
    <location>
        <begin position="150"/>
        <end position="153"/>
    </location>
    <ligand>
        <name>GTP</name>
        <dbReference type="ChEBI" id="CHEBI:37565"/>
    </ligand>
</feature>
<name>LEPA_CORU7</name>
<gene>
    <name evidence="1" type="primary">lepA</name>
    <name type="ordered locus">cu1353</name>
</gene>
<protein>
    <recommendedName>
        <fullName evidence="1">Elongation factor 4</fullName>
        <shortName evidence="1">EF-4</shortName>
        <ecNumber evidence="1">3.6.5.n1</ecNumber>
    </recommendedName>
    <alternativeName>
        <fullName evidence="1">Ribosomal back-translocase LepA</fullName>
    </alternativeName>
</protein>
<reference key="1">
    <citation type="journal article" date="2008" name="J. Biotechnol.">
        <title>The lifestyle of Corynebacterium urealyticum derived from its complete genome sequence established by pyrosequencing.</title>
        <authorList>
            <person name="Tauch A."/>
            <person name="Trost E."/>
            <person name="Tilker A."/>
            <person name="Ludewig U."/>
            <person name="Schneiker S."/>
            <person name="Goesmann A."/>
            <person name="Arnold W."/>
            <person name="Bekel T."/>
            <person name="Brinkrolf K."/>
            <person name="Brune I."/>
            <person name="Goetker S."/>
            <person name="Kalinowski J."/>
            <person name="Kamp P.-B."/>
            <person name="Lobo F.P."/>
            <person name="Viehoever P."/>
            <person name="Weisshaar B."/>
            <person name="Soriano F."/>
            <person name="Droege M."/>
            <person name="Puehler A."/>
        </authorList>
    </citation>
    <scope>NUCLEOTIDE SEQUENCE [LARGE SCALE GENOMIC DNA]</scope>
    <source>
        <strain>ATCC 43042 / DSM 7109</strain>
    </source>
</reference>
<proteinExistence type="inferred from homology"/>